<comment type="subcellular location">
    <subcellularLocation>
        <location>Mitochondrion</location>
    </subcellularLocation>
</comment>
<comment type="similarity">
    <text evidence="1">Belongs to the universal ribosomal protein uS14 family.</text>
</comment>
<name>RT14_PARTE</name>
<feature type="chain" id="PRO_0000131010" description="Small ribosomal subunit protein uS14m">
    <location>
        <begin position="1"/>
        <end position="102"/>
    </location>
</feature>
<feature type="sequence conflict" description="In Ref. 2." evidence="1" ref="2">
    <location>
        <position position="3"/>
    </location>
</feature>
<evidence type="ECO:0000305" key="1"/>
<accession>P15759</accession>
<protein>
    <recommendedName>
        <fullName evidence="1">Small ribosomal subunit protein uS14m</fullName>
    </recommendedName>
    <alternativeName>
        <fullName>Ribosomal protein S14, mitochondrial</fullName>
    </alternativeName>
</protein>
<geneLocation type="mitochondrion"/>
<gene>
    <name type="primary">RPS14</name>
</gene>
<keyword id="KW-0496">Mitochondrion</keyword>
<keyword id="KW-0687">Ribonucleoprotein</keyword>
<keyword id="KW-0689">Ribosomal protein</keyword>
<proteinExistence type="inferred from homology"/>
<organism>
    <name type="scientific">Paramecium tetraurelia</name>
    <dbReference type="NCBI Taxonomy" id="5888"/>
    <lineage>
        <taxon>Eukaryota</taxon>
        <taxon>Sar</taxon>
        <taxon>Alveolata</taxon>
        <taxon>Ciliophora</taxon>
        <taxon>Intramacronucleata</taxon>
        <taxon>Oligohymenophorea</taxon>
        <taxon>Peniculida</taxon>
        <taxon>Parameciidae</taxon>
        <taxon>Paramecium</taxon>
    </lineage>
</organism>
<dbReference type="EMBL" id="X15917">
    <property type="protein sequence ID" value="CAA34041.1"/>
    <property type="molecule type" value="Genomic_DNA"/>
</dbReference>
<dbReference type="EMBL" id="M26930">
    <property type="protein sequence ID" value="AAA79253.1"/>
    <property type="molecule type" value="Genomic_DNA"/>
</dbReference>
<dbReference type="PIR" id="JS0231">
    <property type="entry name" value="R3PP14"/>
</dbReference>
<dbReference type="SMR" id="P15759"/>
<dbReference type="GO" id="GO:0005739">
    <property type="term" value="C:mitochondrion"/>
    <property type="evidence" value="ECO:0007669"/>
    <property type="project" value="UniProtKB-SubCell"/>
</dbReference>
<dbReference type="GO" id="GO:1990904">
    <property type="term" value="C:ribonucleoprotein complex"/>
    <property type="evidence" value="ECO:0007669"/>
    <property type="project" value="UniProtKB-KW"/>
</dbReference>
<dbReference type="GO" id="GO:0005840">
    <property type="term" value="C:ribosome"/>
    <property type="evidence" value="ECO:0007669"/>
    <property type="project" value="UniProtKB-KW"/>
</dbReference>
<dbReference type="GO" id="GO:0003735">
    <property type="term" value="F:structural constituent of ribosome"/>
    <property type="evidence" value="ECO:0007669"/>
    <property type="project" value="InterPro"/>
</dbReference>
<dbReference type="GO" id="GO:0006412">
    <property type="term" value="P:translation"/>
    <property type="evidence" value="ECO:0007669"/>
    <property type="project" value="InterPro"/>
</dbReference>
<dbReference type="Gene3D" id="1.10.287.1480">
    <property type="match status" value="1"/>
</dbReference>
<dbReference type="InterPro" id="IPR001209">
    <property type="entry name" value="Ribosomal_uS14"/>
</dbReference>
<dbReference type="InterPro" id="IPR018271">
    <property type="entry name" value="Ribosomal_uS14_CS"/>
</dbReference>
<dbReference type="Pfam" id="PF00253">
    <property type="entry name" value="Ribosomal_S14"/>
    <property type="match status" value="1"/>
</dbReference>
<dbReference type="SUPFAM" id="SSF57716">
    <property type="entry name" value="Glucocorticoid receptor-like (DNA-binding domain)"/>
    <property type="match status" value="1"/>
</dbReference>
<dbReference type="PROSITE" id="PS00527">
    <property type="entry name" value="RIBOSOMAL_S14"/>
    <property type="match status" value="1"/>
</dbReference>
<reference key="1">
    <citation type="journal article" date="1990" name="Nucleic Acids Res.">
        <title>Nucleotide sequence of the mitochondrial genome of Paramecium.</title>
        <authorList>
            <person name="Pritchard A.E."/>
            <person name="Seilhamer J.J."/>
            <person name="Mahalingam R."/>
            <person name="Sable C.L."/>
            <person name="Venuti S.E."/>
            <person name="Cummings D.J."/>
        </authorList>
    </citation>
    <scope>NUCLEOTIDE SEQUENCE [GENOMIC DNA]</scope>
    <source>
        <strain>Stock 51</strain>
    </source>
</reference>
<reference key="2">
    <citation type="journal article" date="1989" name="Gene">
        <title>An unusual region of Paramecium mitochondrial DNA containing chloroplast-like genes.</title>
        <authorList>
            <person name="Pritchard A.E."/>
            <person name="Venuti S.E."/>
            <person name="Ghalambor M.A."/>
            <person name="Sable C.L."/>
            <person name="Cummings D.J."/>
        </authorList>
    </citation>
    <scope>NUCLEOTIDE SEQUENCE [GENOMIC DNA]</scope>
    <source>
        <strain>Stock 51</strain>
    </source>
</reference>
<sequence length="102" mass="12274">MIIKLSLINIEFLKRMRYRDFEKKRKILECLKKNQNQAKQLRNHLWQLKVSKNNKSRLTKQVDRCCLTGRTKAYIKNFNLSRHAANLHAFEGLLQNTKTKSW</sequence>